<dbReference type="EMBL" id="AE017143">
    <property type="protein sequence ID" value="AAP96684.1"/>
    <property type="molecule type" value="Genomic_DNA"/>
</dbReference>
<dbReference type="RefSeq" id="WP_010945710.1">
    <property type="nucleotide sequence ID" value="NC_002940.2"/>
</dbReference>
<dbReference type="SMR" id="Q7VKE5"/>
<dbReference type="STRING" id="233412.HD_1966"/>
<dbReference type="KEGG" id="hdu:HD_1966"/>
<dbReference type="eggNOG" id="COG0094">
    <property type="taxonomic scope" value="Bacteria"/>
</dbReference>
<dbReference type="HOGENOM" id="CLU_061015_2_1_6"/>
<dbReference type="OrthoDB" id="9806626at2"/>
<dbReference type="Proteomes" id="UP000001022">
    <property type="component" value="Chromosome"/>
</dbReference>
<dbReference type="GO" id="GO:1990904">
    <property type="term" value="C:ribonucleoprotein complex"/>
    <property type="evidence" value="ECO:0007669"/>
    <property type="project" value="UniProtKB-KW"/>
</dbReference>
<dbReference type="GO" id="GO:0005840">
    <property type="term" value="C:ribosome"/>
    <property type="evidence" value="ECO:0007669"/>
    <property type="project" value="UniProtKB-KW"/>
</dbReference>
<dbReference type="GO" id="GO:0019843">
    <property type="term" value="F:rRNA binding"/>
    <property type="evidence" value="ECO:0007669"/>
    <property type="project" value="UniProtKB-UniRule"/>
</dbReference>
<dbReference type="GO" id="GO:0003735">
    <property type="term" value="F:structural constituent of ribosome"/>
    <property type="evidence" value="ECO:0007669"/>
    <property type="project" value="InterPro"/>
</dbReference>
<dbReference type="GO" id="GO:0000049">
    <property type="term" value="F:tRNA binding"/>
    <property type="evidence" value="ECO:0007669"/>
    <property type="project" value="UniProtKB-UniRule"/>
</dbReference>
<dbReference type="GO" id="GO:0006412">
    <property type="term" value="P:translation"/>
    <property type="evidence" value="ECO:0007669"/>
    <property type="project" value="UniProtKB-UniRule"/>
</dbReference>
<dbReference type="FunFam" id="3.30.1440.10:FF:000001">
    <property type="entry name" value="50S ribosomal protein L5"/>
    <property type="match status" value="1"/>
</dbReference>
<dbReference type="Gene3D" id="3.30.1440.10">
    <property type="match status" value="1"/>
</dbReference>
<dbReference type="HAMAP" id="MF_01333_B">
    <property type="entry name" value="Ribosomal_uL5_B"/>
    <property type="match status" value="1"/>
</dbReference>
<dbReference type="InterPro" id="IPR002132">
    <property type="entry name" value="Ribosomal_uL5"/>
</dbReference>
<dbReference type="InterPro" id="IPR020930">
    <property type="entry name" value="Ribosomal_uL5_bac-type"/>
</dbReference>
<dbReference type="InterPro" id="IPR031309">
    <property type="entry name" value="Ribosomal_uL5_C"/>
</dbReference>
<dbReference type="InterPro" id="IPR020929">
    <property type="entry name" value="Ribosomal_uL5_CS"/>
</dbReference>
<dbReference type="InterPro" id="IPR022803">
    <property type="entry name" value="Ribosomal_uL5_dom_sf"/>
</dbReference>
<dbReference type="InterPro" id="IPR031310">
    <property type="entry name" value="Ribosomal_uL5_N"/>
</dbReference>
<dbReference type="NCBIfam" id="NF000585">
    <property type="entry name" value="PRK00010.1"/>
    <property type="match status" value="1"/>
</dbReference>
<dbReference type="PANTHER" id="PTHR11994">
    <property type="entry name" value="60S RIBOSOMAL PROTEIN L11-RELATED"/>
    <property type="match status" value="1"/>
</dbReference>
<dbReference type="Pfam" id="PF00281">
    <property type="entry name" value="Ribosomal_L5"/>
    <property type="match status" value="1"/>
</dbReference>
<dbReference type="Pfam" id="PF00673">
    <property type="entry name" value="Ribosomal_L5_C"/>
    <property type="match status" value="1"/>
</dbReference>
<dbReference type="PIRSF" id="PIRSF002161">
    <property type="entry name" value="Ribosomal_L5"/>
    <property type="match status" value="1"/>
</dbReference>
<dbReference type="SUPFAM" id="SSF55282">
    <property type="entry name" value="RL5-like"/>
    <property type="match status" value="1"/>
</dbReference>
<dbReference type="PROSITE" id="PS00358">
    <property type="entry name" value="RIBOSOMAL_L5"/>
    <property type="match status" value="1"/>
</dbReference>
<organism>
    <name type="scientific">Haemophilus ducreyi (strain 35000HP / ATCC 700724)</name>
    <dbReference type="NCBI Taxonomy" id="233412"/>
    <lineage>
        <taxon>Bacteria</taxon>
        <taxon>Pseudomonadati</taxon>
        <taxon>Pseudomonadota</taxon>
        <taxon>Gammaproteobacteria</taxon>
        <taxon>Pasteurellales</taxon>
        <taxon>Pasteurellaceae</taxon>
        <taxon>Haemophilus</taxon>
    </lineage>
</organism>
<name>RL5_HAEDU</name>
<feature type="chain" id="PRO_0000124932" description="Large ribosomal subunit protein uL5">
    <location>
        <begin position="1"/>
        <end position="179"/>
    </location>
</feature>
<keyword id="KW-1185">Reference proteome</keyword>
<keyword id="KW-0687">Ribonucleoprotein</keyword>
<keyword id="KW-0689">Ribosomal protein</keyword>
<keyword id="KW-0694">RNA-binding</keyword>
<keyword id="KW-0699">rRNA-binding</keyword>
<keyword id="KW-0820">tRNA-binding</keyword>
<evidence type="ECO:0000255" key="1">
    <source>
        <dbReference type="HAMAP-Rule" id="MF_01333"/>
    </source>
</evidence>
<evidence type="ECO:0000305" key="2"/>
<proteinExistence type="inferred from homology"/>
<protein>
    <recommendedName>
        <fullName evidence="1">Large ribosomal subunit protein uL5</fullName>
    </recommendedName>
    <alternativeName>
        <fullName evidence="2">50S ribosomal protein L5</fullName>
    </alternativeName>
</protein>
<comment type="function">
    <text evidence="1">This is one of the proteins that bind and probably mediate the attachment of the 5S RNA into the large ribosomal subunit, where it forms part of the central protuberance. In the 70S ribosome it contacts protein S13 of the 30S subunit (bridge B1b), connecting the 2 subunits; this bridge is implicated in subunit movement. Contacts the P site tRNA; the 5S rRNA and some of its associated proteins might help stabilize positioning of ribosome-bound tRNAs.</text>
</comment>
<comment type="subunit">
    <text evidence="1">Part of the 50S ribosomal subunit; part of the 5S rRNA/L5/L18/L25 subcomplex. Contacts the 5S rRNA and the P site tRNA. Forms a bridge to the 30S subunit in the 70S ribosome.</text>
</comment>
<comment type="similarity">
    <text evidence="1">Belongs to the universal ribosomal protein uL5 family.</text>
</comment>
<sequence>MAKLHDYYRDQVVNELKTKFNYSSVMQVPRIEKITLNMGVGEALTDKKLLDNAVADLTAISGQKPLITKARKSVAGFKIRQGYPIGCKVTLRGERMWEFFERLITIAVPRIRDFRGLSAKSFDGRGNYSMGVREQIIFPEIDYDKVDRVRGLDITITTTAKSDEEGQALLAVFNFPFRK</sequence>
<reference key="1">
    <citation type="submission" date="2003-06" db="EMBL/GenBank/DDBJ databases">
        <title>The complete genome sequence of Haemophilus ducreyi.</title>
        <authorList>
            <person name="Munson R.S. Jr."/>
            <person name="Ray W.C."/>
            <person name="Mahairas G."/>
            <person name="Sabo P."/>
            <person name="Mungur R."/>
            <person name="Johnson L."/>
            <person name="Nguyen D."/>
            <person name="Wang J."/>
            <person name="Forst C."/>
            <person name="Hood L."/>
        </authorList>
    </citation>
    <scope>NUCLEOTIDE SEQUENCE [LARGE SCALE GENOMIC DNA]</scope>
    <source>
        <strain>35000HP / ATCC 700724</strain>
    </source>
</reference>
<gene>
    <name evidence="1" type="primary">rplE</name>
    <name type="ordered locus">HD_1966</name>
</gene>
<accession>Q7VKE5</accession>